<sequence>MSGHSKWSTIKRKKAKIDSQRGKVFTKLSKEIIIAARNGGADPNGNMRLKAAIEKAKIANIPNDNIQRAIQKGAGGGDGANFEEFSYEGYGPGGIAILLNVATDNRNRTAGEVRHILSKHGGNLGETGCVNWMFDEKGIIIIDRSEVNMSEDDIMLAALEAGAEDVKVEDDSFEISTAPEDLQSVKTALIDQGIPVADADTTMVPQTTVKLQGEDAEKMNKMIELLEDNDDIQEVFTNYEEE</sequence>
<feature type="chain" id="PRO_1000083154" description="Probable transcriptional regulatory protein Dred_1658">
    <location>
        <begin position="1"/>
        <end position="242"/>
    </location>
</feature>
<comment type="subcellular location">
    <subcellularLocation>
        <location evidence="1">Cytoplasm</location>
    </subcellularLocation>
</comment>
<comment type="similarity">
    <text evidence="1">Belongs to the TACO1 family.</text>
</comment>
<reference key="1">
    <citation type="submission" date="2007-03" db="EMBL/GenBank/DDBJ databases">
        <title>Complete sequence of Desulfotomaculum reducens MI-1.</title>
        <authorList>
            <consortium name="US DOE Joint Genome Institute"/>
            <person name="Copeland A."/>
            <person name="Lucas S."/>
            <person name="Lapidus A."/>
            <person name="Barry K."/>
            <person name="Detter J.C."/>
            <person name="Glavina del Rio T."/>
            <person name="Hammon N."/>
            <person name="Israni S."/>
            <person name="Dalin E."/>
            <person name="Tice H."/>
            <person name="Pitluck S."/>
            <person name="Sims D."/>
            <person name="Brettin T."/>
            <person name="Bruce D."/>
            <person name="Han C."/>
            <person name="Tapia R."/>
            <person name="Schmutz J."/>
            <person name="Larimer F."/>
            <person name="Land M."/>
            <person name="Hauser L."/>
            <person name="Kyrpides N."/>
            <person name="Kim E."/>
            <person name="Tebo B.M."/>
            <person name="Richardson P."/>
        </authorList>
    </citation>
    <scope>NUCLEOTIDE SEQUENCE [LARGE SCALE GENOMIC DNA]</scope>
    <source>
        <strain>ATCC BAA-1160 / DSM 100696 / MI-1</strain>
    </source>
</reference>
<name>Y1658_DESRM</name>
<accession>A4J533</accession>
<protein>
    <recommendedName>
        <fullName evidence="1">Probable transcriptional regulatory protein Dred_1658</fullName>
    </recommendedName>
</protein>
<organism>
    <name type="scientific">Desulforamulus reducens (strain ATCC BAA-1160 / DSM 100696 / MI-1)</name>
    <name type="common">Desulfotomaculum reducens</name>
    <dbReference type="NCBI Taxonomy" id="349161"/>
    <lineage>
        <taxon>Bacteria</taxon>
        <taxon>Bacillati</taxon>
        <taxon>Bacillota</taxon>
        <taxon>Clostridia</taxon>
        <taxon>Eubacteriales</taxon>
        <taxon>Peptococcaceae</taxon>
        <taxon>Desulforamulus</taxon>
    </lineage>
</organism>
<evidence type="ECO:0000255" key="1">
    <source>
        <dbReference type="HAMAP-Rule" id="MF_00693"/>
    </source>
</evidence>
<keyword id="KW-0963">Cytoplasm</keyword>
<keyword id="KW-0238">DNA-binding</keyword>
<keyword id="KW-1185">Reference proteome</keyword>
<keyword id="KW-0804">Transcription</keyword>
<keyword id="KW-0805">Transcription regulation</keyword>
<proteinExistence type="inferred from homology"/>
<dbReference type="EMBL" id="CP000612">
    <property type="protein sequence ID" value="ABO50186.1"/>
    <property type="molecule type" value="Genomic_DNA"/>
</dbReference>
<dbReference type="RefSeq" id="WP_011878001.1">
    <property type="nucleotide sequence ID" value="NC_009253.1"/>
</dbReference>
<dbReference type="SMR" id="A4J533"/>
<dbReference type="STRING" id="349161.Dred_1658"/>
<dbReference type="KEGG" id="drm:Dred_1658"/>
<dbReference type="eggNOG" id="COG0217">
    <property type="taxonomic scope" value="Bacteria"/>
</dbReference>
<dbReference type="HOGENOM" id="CLU_062974_2_2_9"/>
<dbReference type="OrthoDB" id="9781053at2"/>
<dbReference type="Proteomes" id="UP000001556">
    <property type="component" value="Chromosome"/>
</dbReference>
<dbReference type="GO" id="GO:0005829">
    <property type="term" value="C:cytosol"/>
    <property type="evidence" value="ECO:0007669"/>
    <property type="project" value="TreeGrafter"/>
</dbReference>
<dbReference type="GO" id="GO:0003677">
    <property type="term" value="F:DNA binding"/>
    <property type="evidence" value="ECO:0007669"/>
    <property type="project" value="UniProtKB-UniRule"/>
</dbReference>
<dbReference type="GO" id="GO:0006355">
    <property type="term" value="P:regulation of DNA-templated transcription"/>
    <property type="evidence" value="ECO:0007669"/>
    <property type="project" value="UniProtKB-UniRule"/>
</dbReference>
<dbReference type="FunFam" id="1.10.10.200:FF:000002">
    <property type="entry name" value="Probable transcriptional regulatory protein CLM62_37755"/>
    <property type="match status" value="1"/>
</dbReference>
<dbReference type="FunFam" id="3.30.70.980:FF:000002">
    <property type="entry name" value="Probable transcriptional regulatory protein YebC"/>
    <property type="match status" value="1"/>
</dbReference>
<dbReference type="Gene3D" id="1.10.10.200">
    <property type="match status" value="1"/>
</dbReference>
<dbReference type="Gene3D" id="3.30.70.980">
    <property type="match status" value="2"/>
</dbReference>
<dbReference type="HAMAP" id="MF_00693">
    <property type="entry name" value="Transcrip_reg_TACO1"/>
    <property type="match status" value="1"/>
</dbReference>
<dbReference type="InterPro" id="IPR017856">
    <property type="entry name" value="Integrase-like_N"/>
</dbReference>
<dbReference type="InterPro" id="IPR048300">
    <property type="entry name" value="TACO1_YebC-like_2nd/3rd_dom"/>
</dbReference>
<dbReference type="InterPro" id="IPR049083">
    <property type="entry name" value="TACO1_YebC_N"/>
</dbReference>
<dbReference type="InterPro" id="IPR002876">
    <property type="entry name" value="Transcrip_reg_TACO1-like"/>
</dbReference>
<dbReference type="InterPro" id="IPR026564">
    <property type="entry name" value="Transcrip_reg_TACO1-like_dom3"/>
</dbReference>
<dbReference type="InterPro" id="IPR029072">
    <property type="entry name" value="YebC-like"/>
</dbReference>
<dbReference type="NCBIfam" id="NF001030">
    <property type="entry name" value="PRK00110.1"/>
    <property type="match status" value="1"/>
</dbReference>
<dbReference type="NCBIfam" id="NF009044">
    <property type="entry name" value="PRK12378.1"/>
    <property type="match status" value="1"/>
</dbReference>
<dbReference type="NCBIfam" id="TIGR01033">
    <property type="entry name" value="YebC/PmpR family DNA-binding transcriptional regulator"/>
    <property type="match status" value="1"/>
</dbReference>
<dbReference type="PANTHER" id="PTHR12532:SF6">
    <property type="entry name" value="TRANSCRIPTIONAL REGULATORY PROTEIN YEBC-RELATED"/>
    <property type="match status" value="1"/>
</dbReference>
<dbReference type="PANTHER" id="PTHR12532">
    <property type="entry name" value="TRANSLATIONAL ACTIVATOR OF CYTOCHROME C OXIDASE 1"/>
    <property type="match status" value="1"/>
</dbReference>
<dbReference type="Pfam" id="PF20772">
    <property type="entry name" value="TACO1_YebC_N"/>
    <property type="match status" value="1"/>
</dbReference>
<dbReference type="Pfam" id="PF01709">
    <property type="entry name" value="Transcrip_reg"/>
    <property type="match status" value="1"/>
</dbReference>
<dbReference type="SUPFAM" id="SSF75625">
    <property type="entry name" value="YebC-like"/>
    <property type="match status" value="1"/>
</dbReference>
<gene>
    <name type="ordered locus">Dred_1658</name>
</gene>